<evidence type="ECO:0000255" key="1">
    <source>
        <dbReference type="HAMAP-Rule" id="MF_00167"/>
    </source>
</evidence>
<feature type="chain" id="PRO_1000023399" description="Translational regulator CsrA">
    <location>
        <begin position="1"/>
        <end position="61"/>
    </location>
</feature>
<comment type="function">
    <text evidence="1">A key translational regulator that binds mRNA to regulate translation initiation and/or mRNA stability. Mediates global changes in gene expression, shifting from rapid growth to stress survival by linking envelope stress, the stringent response and the catabolite repression systems. Usually binds in the 5'-UTR; binding at or near the Shine-Dalgarno sequence prevents ribosome-binding, repressing translation, binding elsewhere in the 5'-UTR can activate translation and/or stabilize the mRNA. Its function is antagonized by small RNA(s).</text>
</comment>
<comment type="subunit">
    <text evidence="1">Homodimer; the beta-strands of each monomer intercalate to form a hydrophobic core, while the alpha-helices form wings that extend away from the core.</text>
</comment>
<comment type="subcellular location">
    <subcellularLocation>
        <location evidence="1">Cytoplasm</location>
    </subcellularLocation>
</comment>
<comment type="similarity">
    <text evidence="1">Belongs to the CsrA/RsmA family.</text>
</comment>
<dbReference type="EMBL" id="AE016827">
    <property type="protein sequence ID" value="AAU36954.1"/>
    <property type="molecule type" value="Genomic_DNA"/>
</dbReference>
<dbReference type="RefSeq" id="WP_011199529.1">
    <property type="nucleotide sequence ID" value="NC_006300.1"/>
</dbReference>
<dbReference type="SMR" id="Q65VQ6"/>
<dbReference type="STRING" id="221988.MS0347"/>
<dbReference type="KEGG" id="msu:MS0347"/>
<dbReference type="eggNOG" id="COG1551">
    <property type="taxonomic scope" value="Bacteria"/>
</dbReference>
<dbReference type="HOGENOM" id="CLU_164837_2_1_6"/>
<dbReference type="OrthoDB" id="9809061at2"/>
<dbReference type="Proteomes" id="UP000000607">
    <property type="component" value="Chromosome"/>
</dbReference>
<dbReference type="GO" id="GO:0005829">
    <property type="term" value="C:cytosol"/>
    <property type="evidence" value="ECO:0007669"/>
    <property type="project" value="TreeGrafter"/>
</dbReference>
<dbReference type="GO" id="GO:0048027">
    <property type="term" value="F:mRNA 5'-UTR binding"/>
    <property type="evidence" value="ECO:0007669"/>
    <property type="project" value="UniProtKB-UniRule"/>
</dbReference>
<dbReference type="GO" id="GO:0006402">
    <property type="term" value="P:mRNA catabolic process"/>
    <property type="evidence" value="ECO:0007669"/>
    <property type="project" value="InterPro"/>
</dbReference>
<dbReference type="GO" id="GO:0045947">
    <property type="term" value="P:negative regulation of translational initiation"/>
    <property type="evidence" value="ECO:0007669"/>
    <property type="project" value="UniProtKB-UniRule"/>
</dbReference>
<dbReference type="GO" id="GO:0045948">
    <property type="term" value="P:positive regulation of translational initiation"/>
    <property type="evidence" value="ECO:0007669"/>
    <property type="project" value="UniProtKB-UniRule"/>
</dbReference>
<dbReference type="GO" id="GO:0006109">
    <property type="term" value="P:regulation of carbohydrate metabolic process"/>
    <property type="evidence" value="ECO:0007669"/>
    <property type="project" value="UniProtKB-UniRule"/>
</dbReference>
<dbReference type="FunFam" id="2.60.40.4380:FF:000001">
    <property type="entry name" value="Translational regulator CsrA"/>
    <property type="match status" value="1"/>
</dbReference>
<dbReference type="Gene3D" id="2.60.40.4380">
    <property type="entry name" value="Translational regulator CsrA"/>
    <property type="match status" value="1"/>
</dbReference>
<dbReference type="HAMAP" id="MF_00167">
    <property type="entry name" value="CsrA"/>
    <property type="match status" value="1"/>
</dbReference>
<dbReference type="InterPro" id="IPR003751">
    <property type="entry name" value="CsrA"/>
</dbReference>
<dbReference type="InterPro" id="IPR036107">
    <property type="entry name" value="CsrA_sf"/>
</dbReference>
<dbReference type="NCBIfam" id="TIGR00202">
    <property type="entry name" value="csrA"/>
    <property type="match status" value="1"/>
</dbReference>
<dbReference type="NCBIfam" id="NF002469">
    <property type="entry name" value="PRK01712.1"/>
    <property type="match status" value="1"/>
</dbReference>
<dbReference type="PANTHER" id="PTHR34984">
    <property type="entry name" value="CARBON STORAGE REGULATOR"/>
    <property type="match status" value="1"/>
</dbReference>
<dbReference type="PANTHER" id="PTHR34984:SF1">
    <property type="entry name" value="CARBON STORAGE REGULATOR"/>
    <property type="match status" value="1"/>
</dbReference>
<dbReference type="Pfam" id="PF02599">
    <property type="entry name" value="CsrA"/>
    <property type="match status" value="1"/>
</dbReference>
<dbReference type="SUPFAM" id="SSF117130">
    <property type="entry name" value="CsrA-like"/>
    <property type="match status" value="1"/>
</dbReference>
<proteinExistence type="inferred from homology"/>
<sequence length="61" mass="6834">MLILTRKVGESLLIGDDISITILNVRGNQVKIGVNAPKDVSVHREEIYQRIKQAEEKESTS</sequence>
<accession>Q65VQ6</accession>
<organism>
    <name type="scientific">Mannheimia succiniciproducens (strain KCTC 0769BP / MBEL55E)</name>
    <dbReference type="NCBI Taxonomy" id="221988"/>
    <lineage>
        <taxon>Bacteria</taxon>
        <taxon>Pseudomonadati</taxon>
        <taxon>Pseudomonadota</taxon>
        <taxon>Gammaproteobacteria</taxon>
        <taxon>Pasteurellales</taxon>
        <taxon>Pasteurellaceae</taxon>
        <taxon>Basfia</taxon>
    </lineage>
</organism>
<name>CSRA_MANSM</name>
<gene>
    <name evidence="1" type="primary">csrA</name>
    <name type="ordered locus">MS0347</name>
</gene>
<keyword id="KW-0010">Activator</keyword>
<keyword id="KW-0963">Cytoplasm</keyword>
<keyword id="KW-0678">Repressor</keyword>
<keyword id="KW-0694">RNA-binding</keyword>
<keyword id="KW-0810">Translation regulation</keyword>
<reference key="1">
    <citation type="journal article" date="2004" name="Nat. Biotechnol.">
        <title>The genome sequence of the capnophilic rumen bacterium Mannheimia succiniciproducens.</title>
        <authorList>
            <person name="Hong S.H."/>
            <person name="Kim J.S."/>
            <person name="Lee S.Y."/>
            <person name="In Y.H."/>
            <person name="Choi S.S."/>
            <person name="Rih J.-K."/>
            <person name="Kim C.H."/>
            <person name="Jeong H."/>
            <person name="Hur C.G."/>
            <person name="Kim J.J."/>
        </authorList>
    </citation>
    <scope>NUCLEOTIDE SEQUENCE [LARGE SCALE GENOMIC DNA]</scope>
    <source>
        <strain>KCTC 0769BP / MBEL55E</strain>
    </source>
</reference>
<protein>
    <recommendedName>
        <fullName evidence="1">Translational regulator CsrA</fullName>
    </recommendedName>
    <alternativeName>
        <fullName evidence="1">Carbon storage regulator</fullName>
    </alternativeName>
</protein>